<proteinExistence type="evidence at protein level"/>
<name>NEK4_HUMAN</name>
<accession>P51957</accession>
<accession>A5YM70</accession>
<accession>B2R633</accession>
<accession>B7Z200</accession>
<accession>Q6P576</accession>
<protein>
    <recommendedName>
        <fullName>Serine/threonine-protein kinase Nek4</fullName>
        <ecNumber evidence="2">2.7.11.1</ecNumber>
    </recommendedName>
    <alternativeName>
        <fullName>Never in mitosis A-related kinase 4</fullName>
        <shortName>NimA-related protein kinase 4</shortName>
    </alternativeName>
    <alternativeName>
        <fullName>Serine/threonine-protein kinase 2</fullName>
    </alternativeName>
    <alternativeName>
        <fullName>Serine/threonine-protein kinase NRK2</fullName>
    </alternativeName>
</protein>
<sequence>MPLAAYCYLRVVGKGSYGEVTLVKHRRDGKQYVIKKLNLRNASSRERRAAEQEAQLLSQLKHPNIVTYKESWEGGDGLLYIVMGFCEGGDLYRKLKEQKGQLLPENQVVEWFVQIAMALQYLHEKHILHRDLKTQNVFLTRTNIIKVGDLGIARVLENHCDMASTLIGTPYYMSPELFSNKPYNYKSDVWALGCCVYEMATLKHAFNAKDMNSLVYRIIEGKLPPMPRDYSPELAELIRTMLSKRPEERPSVRSILRQPYIKRQISFFLEATKIKTSKNNIKNGDSQSKPFATVVSGEAESNHEVIHPQPLSSEGSQTYIMGEGKCLSQEKPRASGLLKSPASLKAHTCKQDLSNTTELATISSVNIDILPAKGRDSVSDGFVQENQPRYLDASNELGGICSISQVEEEMLQDNTKSSAQPENLIPMWSSDIVTGEKNEPVKPLQPLIKEQKPKDQSLALSPKLECSGTILAHSNLRLLGSSDSPASASRVAGITGVCHHAQDQVAGECIIEKQGRIHPDLQPHNSGSEPSLSRQRRQKRREQTEHRGEKRQVRRDLFAFQESPPRFLPSHPIVGKVDVTSTQKEAENQRRVVTGSVSSSRSSEMSSSKDRPLSARERRRLKQSQEEMSSSGPSVRKASLSVAGPGKPQEEDQPLPARRLSSDCSVTQERKQIHCLSEDELSSSTSSTDKSDGDYGEGKGQTNEINALVQLMTQTLKLDSKESCEDVPVANPVSEFKLHRKYRDTLILHGKVAEEAEEIHFKELPSAIMPGSEKIRRLVEVLRTDVIRGLGVQLLEQVYDLLEEEDEFDREVRLREHMGEKYTTYSVKARQLKFFEENMNF</sequence>
<keyword id="KW-0025">Alternative splicing</keyword>
<keyword id="KW-0067">ATP-binding</keyword>
<keyword id="KW-0131">Cell cycle</keyword>
<keyword id="KW-0132">Cell division</keyword>
<keyword id="KW-0966">Cell projection</keyword>
<keyword id="KW-0963">Cytoplasm</keyword>
<keyword id="KW-0418">Kinase</keyword>
<keyword id="KW-0460">Magnesium</keyword>
<keyword id="KW-0479">Metal-binding</keyword>
<keyword id="KW-0488">Methylation</keyword>
<keyword id="KW-0498">Mitosis</keyword>
<keyword id="KW-0547">Nucleotide-binding</keyword>
<keyword id="KW-0597">Phosphoprotein</keyword>
<keyword id="KW-1267">Proteomics identification</keyword>
<keyword id="KW-1185">Reference proteome</keyword>
<keyword id="KW-0723">Serine/threonine-protein kinase</keyword>
<keyword id="KW-0808">Transferase</keyword>
<reference key="1">
    <citation type="journal article" date="1994" name="Oncogene">
        <title>Two novel human serine/threonine kinases with homologies to the cell cycle regulating Xenopus MO15, and NIMA kinases: cloning and characterization of their expression pattern.</title>
        <authorList>
            <person name="Levedakou E.N."/>
            <person name="He M."/>
            <person name="Baptist E.W."/>
            <person name="Craven R.J."/>
            <person name="Cance W.G."/>
            <person name="Welcsh P.L."/>
            <person name="Simmons A."/>
            <person name="Naylor S.L."/>
            <person name="Leach R.J."/>
            <person name="Lewis T.B."/>
            <person name="Bowcock A."/>
            <person name="Liu E.T."/>
        </authorList>
    </citation>
    <scope>NUCLEOTIDE SEQUENCE [MRNA] (ISOFORM 1)</scope>
    <scope>VARIANT ALA-225</scope>
    <scope>TISSUE SPECIFICITY</scope>
    <source>
        <tissue>Mammary gland</tissue>
    </source>
</reference>
<reference key="2">
    <citation type="submission" date="2007-04" db="EMBL/GenBank/DDBJ databases">
        <authorList>
            <person name="Schupp I."/>
        </authorList>
    </citation>
    <scope>NUCLEOTIDE SEQUENCE [MRNA] (ISOFORM 1)</scope>
    <scope>VARIANT ALA-225</scope>
</reference>
<reference key="3">
    <citation type="journal article" date="2004" name="Nat. Genet.">
        <title>Complete sequencing and characterization of 21,243 full-length human cDNAs.</title>
        <authorList>
            <person name="Ota T."/>
            <person name="Suzuki Y."/>
            <person name="Nishikawa T."/>
            <person name="Otsuki T."/>
            <person name="Sugiyama T."/>
            <person name="Irie R."/>
            <person name="Wakamatsu A."/>
            <person name="Hayashi K."/>
            <person name="Sato H."/>
            <person name="Nagai K."/>
            <person name="Kimura K."/>
            <person name="Makita H."/>
            <person name="Sekine M."/>
            <person name="Obayashi M."/>
            <person name="Nishi T."/>
            <person name="Shibahara T."/>
            <person name="Tanaka T."/>
            <person name="Ishii S."/>
            <person name="Yamamoto J."/>
            <person name="Saito K."/>
            <person name="Kawai Y."/>
            <person name="Isono Y."/>
            <person name="Nakamura Y."/>
            <person name="Nagahari K."/>
            <person name="Murakami K."/>
            <person name="Yasuda T."/>
            <person name="Iwayanagi T."/>
            <person name="Wagatsuma M."/>
            <person name="Shiratori A."/>
            <person name="Sudo H."/>
            <person name="Hosoiri T."/>
            <person name="Kaku Y."/>
            <person name="Kodaira H."/>
            <person name="Kondo H."/>
            <person name="Sugawara M."/>
            <person name="Takahashi M."/>
            <person name="Kanda K."/>
            <person name="Yokoi T."/>
            <person name="Furuya T."/>
            <person name="Kikkawa E."/>
            <person name="Omura Y."/>
            <person name="Abe K."/>
            <person name="Kamihara K."/>
            <person name="Katsuta N."/>
            <person name="Sato K."/>
            <person name="Tanikawa M."/>
            <person name="Yamazaki M."/>
            <person name="Ninomiya K."/>
            <person name="Ishibashi T."/>
            <person name="Yamashita H."/>
            <person name="Murakawa K."/>
            <person name="Fujimori K."/>
            <person name="Tanai H."/>
            <person name="Kimata M."/>
            <person name="Watanabe M."/>
            <person name="Hiraoka S."/>
            <person name="Chiba Y."/>
            <person name="Ishida S."/>
            <person name="Ono Y."/>
            <person name="Takiguchi S."/>
            <person name="Watanabe S."/>
            <person name="Yosida M."/>
            <person name="Hotuta T."/>
            <person name="Kusano J."/>
            <person name="Kanehori K."/>
            <person name="Takahashi-Fujii A."/>
            <person name="Hara H."/>
            <person name="Tanase T.-O."/>
            <person name="Nomura Y."/>
            <person name="Togiya S."/>
            <person name="Komai F."/>
            <person name="Hara R."/>
            <person name="Takeuchi K."/>
            <person name="Arita M."/>
            <person name="Imose N."/>
            <person name="Musashino K."/>
            <person name="Yuuki H."/>
            <person name="Oshima A."/>
            <person name="Sasaki N."/>
            <person name="Aotsuka S."/>
            <person name="Yoshikawa Y."/>
            <person name="Matsunawa H."/>
            <person name="Ichihara T."/>
            <person name="Shiohata N."/>
            <person name="Sano S."/>
            <person name="Moriya S."/>
            <person name="Momiyama H."/>
            <person name="Satoh N."/>
            <person name="Takami S."/>
            <person name="Terashima Y."/>
            <person name="Suzuki O."/>
            <person name="Nakagawa S."/>
            <person name="Senoh A."/>
            <person name="Mizoguchi H."/>
            <person name="Goto Y."/>
            <person name="Shimizu F."/>
            <person name="Wakebe H."/>
            <person name="Hishigaki H."/>
            <person name="Watanabe T."/>
            <person name="Sugiyama A."/>
            <person name="Takemoto M."/>
            <person name="Kawakami B."/>
            <person name="Yamazaki M."/>
            <person name="Watanabe K."/>
            <person name="Kumagai A."/>
            <person name="Itakura S."/>
            <person name="Fukuzumi Y."/>
            <person name="Fujimori Y."/>
            <person name="Komiyama M."/>
            <person name="Tashiro H."/>
            <person name="Tanigami A."/>
            <person name="Fujiwara T."/>
            <person name="Ono T."/>
            <person name="Yamada K."/>
            <person name="Fujii Y."/>
            <person name="Ozaki K."/>
            <person name="Hirao M."/>
            <person name="Ohmori Y."/>
            <person name="Kawabata A."/>
            <person name="Hikiji T."/>
            <person name="Kobatake N."/>
            <person name="Inagaki H."/>
            <person name="Ikema Y."/>
            <person name="Okamoto S."/>
            <person name="Okitani R."/>
            <person name="Kawakami T."/>
            <person name="Noguchi S."/>
            <person name="Itoh T."/>
            <person name="Shigeta K."/>
            <person name="Senba T."/>
            <person name="Matsumura K."/>
            <person name="Nakajima Y."/>
            <person name="Mizuno T."/>
            <person name="Morinaga M."/>
            <person name="Sasaki M."/>
            <person name="Togashi T."/>
            <person name="Oyama M."/>
            <person name="Hata H."/>
            <person name="Watanabe M."/>
            <person name="Komatsu T."/>
            <person name="Mizushima-Sugano J."/>
            <person name="Satoh T."/>
            <person name="Shirai Y."/>
            <person name="Takahashi Y."/>
            <person name="Nakagawa K."/>
            <person name="Okumura K."/>
            <person name="Nagase T."/>
            <person name="Nomura N."/>
            <person name="Kikuchi H."/>
            <person name="Masuho Y."/>
            <person name="Yamashita R."/>
            <person name="Nakai K."/>
            <person name="Yada T."/>
            <person name="Nakamura Y."/>
            <person name="Ohara O."/>
            <person name="Isogai T."/>
            <person name="Sugano S."/>
        </authorList>
    </citation>
    <scope>NUCLEOTIDE SEQUENCE [LARGE SCALE MRNA] (ISOFORMS 1 AND 3)</scope>
    <source>
        <tissue>Amygdala</tissue>
        <tissue>Brain</tissue>
    </source>
</reference>
<reference key="4">
    <citation type="journal article" date="2006" name="Nature">
        <title>The DNA sequence, annotation and analysis of human chromosome 3.</title>
        <authorList>
            <person name="Muzny D.M."/>
            <person name="Scherer S.E."/>
            <person name="Kaul R."/>
            <person name="Wang J."/>
            <person name="Yu J."/>
            <person name="Sudbrak R."/>
            <person name="Buhay C.J."/>
            <person name="Chen R."/>
            <person name="Cree A."/>
            <person name="Ding Y."/>
            <person name="Dugan-Rocha S."/>
            <person name="Gill R."/>
            <person name="Gunaratne P."/>
            <person name="Harris R.A."/>
            <person name="Hawes A.C."/>
            <person name="Hernandez J."/>
            <person name="Hodgson A.V."/>
            <person name="Hume J."/>
            <person name="Jackson A."/>
            <person name="Khan Z.M."/>
            <person name="Kovar-Smith C."/>
            <person name="Lewis L.R."/>
            <person name="Lozado R.J."/>
            <person name="Metzker M.L."/>
            <person name="Milosavljevic A."/>
            <person name="Miner G.R."/>
            <person name="Morgan M.B."/>
            <person name="Nazareth L.V."/>
            <person name="Scott G."/>
            <person name="Sodergren E."/>
            <person name="Song X.-Z."/>
            <person name="Steffen D."/>
            <person name="Wei S."/>
            <person name="Wheeler D.A."/>
            <person name="Wright M.W."/>
            <person name="Worley K.C."/>
            <person name="Yuan Y."/>
            <person name="Zhang Z."/>
            <person name="Adams C.Q."/>
            <person name="Ansari-Lari M.A."/>
            <person name="Ayele M."/>
            <person name="Brown M.J."/>
            <person name="Chen G."/>
            <person name="Chen Z."/>
            <person name="Clendenning J."/>
            <person name="Clerc-Blankenburg K.P."/>
            <person name="Chen R."/>
            <person name="Chen Z."/>
            <person name="Davis C."/>
            <person name="Delgado O."/>
            <person name="Dinh H.H."/>
            <person name="Dong W."/>
            <person name="Draper H."/>
            <person name="Ernst S."/>
            <person name="Fu G."/>
            <person name="Gonzalez-Garay M.L."/>
            <person name="Garcia D.K."/>
            <person name="Gillett W."/>
            <person name="Gu J."/>
            <person name="Hao B."/>
            <person name="Haugen E."/>
            <person name="Havlak P."/>
            <person name="He X."/>
            <person name="Hennig S."/>
            <person name="Hu S."/>
            <person name="Huang W."/>
            <person name="Jackson L.R."/>
            <person name="Jacob L.S."/>
            <person name="Kelly S.H."/>
            <person name="Kube M."/>
            <person name="Levy R."/>
            <person name="Li Z."/>
            <person name="Liu B."/>
            <person name="Liu J."/>
            <person name="Liu W."/>
            <person name="Lu J."/>
            <person name="Maheshwari M."/>
            <person name="Nguyen B.-V."/>
            <person name="Okwuonu G.O."/>
            <person name="Palmeiri A."/>
            <person name="Pasternak S."/>
            <person name="Perez L.M."/>
            <person name="Phelps K.A."/>
            <person name="Plopper F.J."/>
            <person name="Qiang B."/>
            <person name="Raymond C."/>
            <person name="Rodriguez R."/>
            <person name="Saenphimmachak C."/>
            <person name="Santibanez J."/>
            <person name="Shen H."/>
            <person name="Shen Y."/>
            <person name="Subramanian S."/>
            <person name="Tabor P.E."/>
            <person name="Verduzco D."/>
            <person name="Waldron L."/>
            <person name="Wang J."/>
            <person name="Wang J."/>
            <person name="Wang Q."/>
            <person name="Williams G.A."/>
            <person name="Wong G.K.-S."/>
            <person name="Yao Z."/>
            <person name="Zhang J."/>
            <person name="Zhang X."/>
            <person name="Zhao G."/>
            <person name="Zhou J."/>
            <person name="Zhou Y."/>
            <person name="Nelson D."/>
            <person name="Lehrach H."/>
            <person name="Reinhardt R."/>
            <person name="Naylor S.L."/>
            <person name="Yang H."/>
            <person name="Olson M."/>
            <person name="Weinstock G."/>
            <person name="Gibbs R.A."/>
        </authorList>
    </citation>
    <scope>NUCLEOTIDE SEQUENCE [LARGE SCALE GENOMIC DNA]</scope>
</reference>
<reference key="5">
    <citation type="journal article" date="2004" name="Genome Res.">
        <title>The status, quality, and expansion of the NIH full-length cDNA project: the Mammalian Gene Collection (MGC).</title>
        <authorList>
            <consortium name="The MGC Project Team"/>
        </authorList>
    </citation>
    <scope>NUCLEOTIDE SEQUENCE [LARGE SCALE MRNA] (ISOFORM 2)</scope>
    <scope>VARIANT ALA-225</scope>
    <source>
        <tissue>Brain</tissue>
    </source>
</reference>
<reference key="6">
    <citation type="journal article" date="2008" name="Proc. Natl. Acad. Sci. U.S.A.">
        <title>A quantitative atlas of mitotic phosphorylation.</title>
        <authorList>
            <person name="Dephoure N."/>
            <person name="Zhou C."/>
            <person name="Villen J."/>
            <person name="Beausoleil S.A."/>
            <person name="Bakalarski C.E."/>
            <person name="Elledge S.J."/>
            <person name="Gygi S.P."/>
        </authorList>
    </citation>
    <scope>IDENTIFICATION BY MASS SPECTROMETRY [LARGE SCALE ANALYSIS]</scope>
    <source>
        <tissue>Cervix carcinoma</tissue>
    </source>
</reference>
<reference key="7">
    <citation type="journal article" date="2009" name="Sci. Signal.">
        <title>Quantitative phosphoproteomic analysis of T cell receptor signaling reveals system-wide modulation of protein-protein interactions.</title>
        <authorList>
            <person name="Mayya V."/>
            <person name="Lundgren D.H."/>
            <person name="Hwang S.-I."/>
            <person name="Rezaul K."/>
            <person name="Wu L."/>
            <person name="Eng J.K."/>
            <person name="Rodionov V."/>
            <person name="Han D.K."/>
        </authorList>
    </citation>
    <scope>PHOSPHORYLATION [LARGE SCALE ANALYSIS] AT SER-563</scope>
    <scope>IDENTIFICATION BY MASS SPECTROMETRY [LARGE SCALE ANALYSIS]</scope>
    <source>
        <tissue>Leukemic T-cell</tissue>
    </source>
</reference>
<reference key="8">
    <citation type="journal article" date="2011" name="Hum. Mol. Genet.">
        <title>The ciliopathy-associated protein homologs RPGRIP1 and RPGRIP1L are linked to cilium integrity through interaction with Nek4 serine/threonine kinase.</title>
        <authorList>
            <person name="Coene K.L."/>
            <person name="Mans D.A."/>
            <person name="Boldt K."/>
            <person name="Gloeckner C.J."/>
            <person name="van Reeuwijk J."/>
            <person name="Bolat E."/>
            <person name="Roosing S."/>
            <person name="Letteboer S.J."/>
            <person name="Peters T.A."/>
            <person name="Cremers F.P."/>
            <person name="Ueffing M."/>
            <person name="Roepman R."/>
        </authorList>
    </citation>
    <scope>INTERACTION WITH RPGRIP1 AND RPGRIP1L</scope>
    <scope>SUBCELLULAR LOCATION</scope>
    <scope>TISSUE SPECIFICITY</scope>
</reference>
<reference key="9">
    <citation type="journal article" date="2012" name="Mol. Cell. Biol.">
        <title>Nek4 regulates entry into replicative senescence and the response to DNA damage in human fibroblasts.</title>
        <authorList>
            <person name="Nguyen C.L."/>
            <person name="Possemato R."/>
            <person name="Bauerlein E.L."/>
            <person name="Xie A."/>
            <person name="Scully R."/>
            <person name="Hahn W.C."/>
        </authorList>
    </citation>
    <scope>FUNCTION</scope>
</reference>
<reference key="10">
    <citation type="journal article" date="2013" name="J. Proteome Res.">
        <title>Toward a comprehensive characterization of a human cancer cell phosphoproteome.</title>
        <authorList>
            <person name="Zhou H."/>
            <person name="Di Palma S."/>
            <person name="Preisinger C."/>
            <person name="Peng M."/>
            <person name="Polat A.N."/>
            <person name="Heck A.J."/>
            <person name="Mohammed S."/>
        </authorList>
    </citation>
    <scope>PHOSPHORYLATION [LARGE SCALE ANALYSIS] AT SER-340; SER-343; SER-461 AND SER-563</scope>
    <scope>IDENTIFICATION BY MASS SPECTROMETRY [LARGE SCALE ANALYSIS]</scope>
    <source>
        <tissue>Cervix carcinoma</tissue>
        <tissue>Erythroleukemia</tissue>
    </source>
</reference>
<reference key="11">
    <citation type="journal article" date="2014" name="Mol. Cell. Proteomics">
        <title>Immunoaffinity enrichment and mass spectrometry analysis of protein methylation.</title>
        <authorList>
            <person name="Guo A."/>
            <person name="Gu H."/>
            <person name="Zhou J."/>
            <person name="Mulhern D."/>
            <person name="Wang Y."/>
            <person name="Lee K.A."/>
            <person name="Yang V."/>
            <person name="Aguiar M."/>
            <person name="Kornhauser J."/>
            <person name="Jia X."/>
            <person name="Ren J."/>
            <person name="Beausoleil S.A."/>
            <person name="Silva J.C."/>
            <person name="Vemulapalli V."/>
            <person name="Bedford M.T."/>
            <person name="Comb M.J."/>
        </authorList>
    </citation>
    <scope>METHYLATION [LARGE SCALE ANALYSIS] AT LYS-622</scope>
    <scope>IDENTIFICATION BY MASS SPECTROMETRY [LARGE SCALE ANALYSIS]</scope>
    <source>
        <tissue>Colon carcinoma</tissue>
    </source>
</reference>
<reference key="12">
    <citation type="journal article" date="2007" name="Nature">
        <title>Patterns of somatic mutation in human cancer genomes.</title>
        <authorList>
            <person name="Greenman C."/>
            <person name="Stephens P."/>
            <person name="Smith R."/>
            <person name="Dalgliesh G.L."/>
            <person name="Hunter C."/>
            <person name="Bignell G."/>
            <person name="Davies H."/>
            <person name="Teague J."/>
            <person name="Butler A."/>
            <person name="Stevens C."/>
            <person name="Edkins S."/>
            <person name="O'Meara S."/>
            <person name="Vastrik I."/>
            <person name="Schmidt E.E."/>
            <person name="Avis T."/>
            <person name="Barthorpe S."/>
            <person name="Bhamra G."/>
            <person name="Buck G."/>
            <person name="Choudhury B."/>
            <person name="Clements J."/>
            <person name="Cole J."/>
            <person name="Dicks E."/>
            <person name="Forbes S."/>
            <person name="Gray K."/>
            <person name="Halliday K."/>
            <person name="Harrison R."/>
            <person name="Hills K."/>
            <person name="Hinton J."/>
            <person name="Jenkinson A."/>
            <person name="Jones D."/>
            <person name="Menzies A."/>
            <person name="Mironenko T."/>
            <person name="Perry J."/>
            <person name="Raine K."/>
            <person name="Richardson D."/>
            <person name="Shepherd R."/>
            <person name="Small A."/>
            <person name="Tofts C."/>
            <person name="Varian J."/>
            <person name="Webb T."/>
            <person name="West S."/>
            <person name="Widaa S."/>
            <person name="Yates A."/>
            <person name="Cahill D.P."/>
            <person name="Louis D.N."/>
            <person name="Goldstraw P."/>
            <person name="Nicholson A.G."/>
            <person name="Brasseur F."/>
            <person name="Looijenga L."/>
            <person name="Weber B.L."/>
            <person name="Chiew Y.-E."/>
            <person name="DeFazio A."/>
            <person name="Greaves M.F."/>
            <person name="Green A.R."/>
            <person name="Campbell P."/>
            <person name="Birney E."/>
            <person name="Easton D.F."/>
            <person name="Chenevix-Trench G."/>
            <person name="Tan M.-H."/>
            <person name="Khoo S.K."/>
            <person name="Teh B.T."/>
            <person name="Yuen S.T."/>
            <person name="Leung S.Y."/>
            <person name="Wooster R."/>
            <person name="Futreal P.A."/>
            <person name="Stratton M.R."/>
        </authorList>
    </citation>
    <scope>VARIANTS [LARGE SCALE ANALYSIS] ALA-225; GLY-239; LEU-250; ILE-357; GLU-456; LEU-567 AND LYS-777</scope>
</reference>
<comment type="function">
    <text evidence="2 9">Protein kinase that seems to act exclusively upon threonine residues (By similarity). Required for normal entry into proliferative arrest after a limited number of cell divisions, also called replicative senescence. Required for normal cell cycle arrest in response to double-stranded DNA damage.</text>
</comment>
<comment type="catalytic activity">
    <reaction evidence="2">
        <text>L-seryl-[protein] + ATP = O-phospho-L-seryl-[protein] + ADP + H(+)</text>
        <dbReference type="Rhea" id="RHEA:17989"/>
        <dbReference type="Rhea" id="RHEA-COMP:9863"/>
        <dbReference type="Rhea" id="RHEA-COMP:11604"/>
        <dbReference type="ChEBI" id="CHEBI:15378"/>
        <dbReference type="ChEBI" id="CHEBI:29999"/>
        <dbReference type="ChEBI" id="CHEBI:30616"/>
        <dbReference type="ChEBI" id="CHEBI:83421"/>
        <dbReference type="ChEBI" id="CHEBI:456216"/>
        <dbReference type="EC" id="2.7.11.1"/>
    </reaction>
</comment>
<comment type="catalytic activity">
    <reaction evidence="2">
        <text>L-threonyl-[protein] + ATP = O-phospho-L-threonyl-[protein] + ADP + H(+)</text>
        <dbReference type="Rhea" id="RHEA:46608"/>
        <dbReference type="Rhea" id="RHEA-COMP:11060"/>
        <dbReference type="Rhea" id="RHEA-COMP:11605"/>
        <dbReference type="ChEBI" id="CHEBI:15378"/>
        <dbReference type="ChEBI" id="CHEBI:30013"/>
        <dbReference type="ChEBI" id="CHEBI:30616"/>
        <dbReference type="ChEBI" id="CHEBI:61977"/>
        <dbReference type="ChEBI" id="CHEBI:456216"/>
        <dbReference type="EC" id="2.7.11.1"/>
    </reaction>
</comment>
<comment type="cofactor">
    <cofactor evidence="2">
        <name>Mn(2+)</name>
        <dbReference type="ChEBI" id="CHEBI:29035"/>
    </cofactor>
</comment>
<comment type="subunit">
    <text evidence="8">Interacts with RPGRIP1 and RPGRIP1L.</text>
</comment>
<comment type="subcellular location">
    <subcellularLocation>
        <location evidence="8">Cell projection</location>
        <location evidence="8">Cilium</location>
    </subcellularLocation>
    <subcellularLocation>
        <location evidence="8">Cytoplasm</location>
    </subcellularLocation>
</comment>
<comment type="alternative products">
    <event type="alternative splicing"/>
    <isoform>
        <id>P51957-1</id>
        <name>1</name>
        <sequence type="displayed"/>
    </isoform>
    <isoform>
        <id>P51957-2</id>
        <name>2</name>
        <sequence type="described" ref="VSP_037123 VSP_037124"/>
    </isoform>
    <isoform>
        <id>P51957-3</id>
        <name>3</name>
        <sequence type="described" ref="VSP_043334"/>
    </isoform>
</comment>
<comment type="tissue specificity">
    <text evidence="8 10">Highest expression in adult heart, followed by pancreas, skeletal muscle, brain, testis, retina, liver, kidney, lung and placenta. Present in most primary carcinomas.</text>
</comment>
<comment type="similarity">
    <text evidence="14">Belongs to the protein kinase superfamily. NEK Ser/Thr protein kinase family. NIMA subfamily.</text>
</comment>
<evidence type="ECO:0000250" key="1"/>
<evidence type="ECO:0000250" key="2">
    <source>
        <dbReference type="UniProtKB" id="Q9Z1J2"/>
    </source>
</evidence>
<evidence type="ECO:0000255" key="3">
    <source>
        <dbReference type="PROSITE-ProRule" id="PRU00159"/>
    </source>
</evidence>
<evidence type="ECO:0000255" key="4">
    <source>
        <dbReference type="PROSITE-ProRule" id="PRU10027"/>
    </source>
</evidence>
<evidence type="ECO:0000256" key="5">
    <source>
        <dbReference type="SAM" id="MobiDB-lite"/>
    </source>
</evidence>
<evidence type="ECO:0000269" key="6">
    <source>
    </source>
</evidence>
<evidence type="ECO:0000269" key="7">
    <source>
    </source>
</evidence>
<evidence type="ECO:0000269" key="8">
    <source>
    </source>
</evidence>
<evidence type="ECO:0000269" key="9">
    <source>
    </source>
</evidence>
<evidence type="ECO:0000269" key="10">
    <source>
    </source>
</evidence>
<evidence type="ECO:0000269" key="11">
    <source ref="2"/>
</evidence>
<evidence type="ECO:0000303" key="12">
    <source>
    </source>
</evidence>
<evidence type="ECO:0000303" key="13">
    <source>
    </source>
</evidence>
<evidence type="ECO:0000305" key="14"/>
<evidence type="ECO:0007744" key="15">
    <source>
    </source>
</evidence>
<evidence type="ECO:0007744" key="16">
    <source>
    </source>
</evidence>
<evidence type="ECO:0007744" key="17">
    <source>
    </source>
</evidence>
<gene>
    <name type="primary">NEK4</name>
    <name type="synonym">STK2</name>
</gene>
<organism>
    <name type="scientific">Homo sapiens</name>
    <name type="common">Human</name>
    <dbReference type="NCBI Taxonomy" id="9606"/>
    <lineage>
        <taxon>Eukaryota</taxon>
        <taxon>Metazoa</taxon>
        <taxon>Chordata</taxon>
        <taxon>Craniata</taxon>
        <taxon>Vertebrata</taxon>
        <taxon>Euteleostomi</taxon>
        <taxon>Mammalia</taxon>
        <taxon>Eutheria</taxon>
        <taxon>Euarchontoglires</taxon>
        <taxon>Primates</taxon>
        <taxon>Haplorrhini</taxon>
        <taxon>Catarrhini</taxon>
        <taxon>Hominidae</taxon>
        <taxon>Homo</taxon>
    </lineage>
</organism>
<feature type="chain" id="PRO_0000086425" description="Serine/threonine-protein kinase Nek4">
    <location>
        <begin position="1"/>
        <end position="841"/>
    </location>
</feature>
<feature type="domain" description="Protein kinase" evidence="3">
    <location>
        <begin position="6"/>
        <end position="261"/>
    </location>
</feature>
<feature type="region of interest" description="Disordered" evidence="5">
    <location>
        <begin position="517"/>
        <end position="700"/>
    </location>
</feature>
<feature type="compositionally biased region" description="Polar residues" evidence="5">
    <location>
        <begin position="523"/>
        <end position="533"/>
    </location>
</feature>
<feature type="compositionally biased region" description="Basic and acidic residues" evidence="5">
    <location>
        <begin position="541"/>
        <end position="557"/>
    </location>
</feature>
<feature type="compositionally biased region" description="Low complexity" evidence="5">
    <location>
        <begin position="591"/>
        <end position="606"/>
    </location>
</feature>
<feature type="compositionally biased region" description="Basic and acidic residues" evidence="5">
    <location>
        <begin position="607"/>
        <end position="616"/>
    </location>
</feature>
<feature type="active site" description="Proton acceptor" evidence="3 4">
    <location>
        <position position="131"/>
    </location>
</feature>
<feature type="binding site" evidence="3">
    <location>
        <begin position="12"/>
        <end position="20"/>
    </location>
    <ligand>
        <name>ATP</name>
        <dbReference type="ChEBI" id="CHEBI:30616"/>
    </ligand>
</feature>
<feature type="binding site" evidence="3">
    <location>
        <position position="35"/>
    </location>
    <ligand>
        <name>ATP</name>
        <dbReference type="ChEBI" id="CHEBI:30616"/>
    </ligand>
</feature>
<feature type="modified residue" description="Phosphothreonine; by autocatalysis" evidence="1">
    <location>
        <position position="165"/>
    </location>
</feature>
<feature type="modified residue" description="Phosphoserine" evidence="16">
    <location>
        <position position="340"/>
    </location>
</feature>
<feature type="modified residue" description="Phosphoserine" evidence="16">
    <location>
        <position position="343"/>
    </location>
</feature>
<feature type="modified residue" description="Phosphoserine" evidence="16">
    <location>
        <position position="461"/>
    </location>
</feature>
<feature type="modified residue" description="Phosphoserine" evidence="15 16">
    <location>
        <position position="563"/>
    </location>
</feature>
<feature type="modified residue" description="N6-methyllysine" evidence="17">
    <location>
        <position position="622"/>
    </location>
</feature>
<feature type="modified residue" description="Phosphoserine" evidence="2">
    <location>
        <position position="723"/>
    </location>
</feature>
<feature type="splice variant" id="VSP_043334" description="In isoform 3." evidence="12">
    <location>
        <begin position="32"/>
        <end position="120"/>
    </location>
</feature>
<feature type="splice variant" id="VSP_037123" description="In isoform 2." evidence="13">
    <location>
        <begin position="457"/>
        <end position="502"/>
    </location>
</feature>
<feature type="splice variant" id="VSP_037124" description="In isoform 2." evidence="13">
    <original>RLREHMGEKYTTYSVKARQLKFFEENMNF</original>
    <variation>SVSLTVSRCLCYRIF</variation>
    <location>
        <begin position="813"/>
        <end position="841"/>
    </location>
</feature>
<feature type="sequence variant" id="VAR_040915" description="In dbSNP:rs1029871." evidence="6 7 10 11">
    <original>P</original>
    <variation>A</variation>
    <location>
        <position position="225"/>
    </location>
</feature>
<feature type="sequence variant" id="VAR_040916" description="In dbSNP:rs35778416." evidence="7">
    <original>R</original>
    <variation>G</variation>
    <location>
        <position position="239"/>
    </location>
</feature>
<feature type="sequence variant" id="VAR_040917" description="In dbSNP:rs56408749." evidence="7">
    <original>P</original>
    <variation>L</variation>
    <location>
        <position position="250"/>
    </location>
</feature>
<feature type="sequence variant" id="VAR_040918" description="In dbSNP:rs2230537." evidence="7">
    <original>T</original>
    <variation>I</variation>
    <location>
        <position position="357"/>
    </location>
</feature>
<feature type="sequence variant" id="VAR_040919" description="In dbSNP:rs56019351." evidence="7">
    <original>Q</original>
    <variation>E</variation>
    <location>
        <position position="456"/>
    </location>
</feature>
<feature type="sequence variant" id="VAR_040920" description="In dbSNP:rs34986855." evidence="7">
    <original>F</original>
    <variation>L</variation>
    <location>
        <position position="567"/>
    </location>
</feature>
<feature type="sequence variant" id="VAR_040921" description="In a colorectal adenocarcinoma sample; somatic mutation." evidence="7">
    <original>R</original>
    <variation>K</variation>
    <location>
        <position position="777"/>
    </location>
</feature>
<feature type="sequence conflict" description="In Ref. 3; BAG35330." evidence="14" ref="3">
    <original>P</original>
    <variation>L</variation>
    <location>
        <position position="63"/>
    </location>
</feature>
<feature type="sequence conflict" description="In Ref. 2; ABQ59054." evidence="14" ref="2">
    <original>N</original>
    <variation>D</variation>
    <location>
        <position position="64"/>
    </location>
</feature>
<feature type="sequence conflict" description="In Ref. 3; BAG35330." evidence="14" ref="3">
    <original>R</original>
    <variation>K</variation>
    <location>
        <position position="333"/>
    </location>
</feature>
<dbReference type="EC" id="2.7.11.1" evidence="2"/>
<dbReference type="EMBL" id="L20321">
    <property type="protein sequence ID" value="AAA36658.1"/>
    <property type="molecule type" value="mRNA"/>
</dbReference>
<dbReference type="EMBL" id="EF560744">
    <property type="protein sequence ID" value="ABQ59054.1"/>
    <property type="molecule type" value="mRNA"/>
</dbReference>
<dbReference type="EMBL" id="AK294165">
    <property type="protein sequence ID" value="BAH11686.1"/>
    <property type="molecule type" value="mRNA"/>
</dbReference>
<dbReference type="EMBL" id="AK312420">
    <property type="protein sequence ID" value="BAG35330.1"/>
    <property type="molecule type" value="mRNA"/>
</dbReference>
<dbReference type="EMBL" id="AC006254">
    <property type="status" value="NOT_ANNOTATED_CDS"/>
    <property type="molecule type" value="Genomic_DNA"/>
</dbReference>
<dbReference type="EMBL" id="AC104446">
    <property type="status" value="NOT_ANNOTATED_CDS"/>
    <property type="molecule type" value="Genomic_DNA"/>
</dbReference>
<dbReference type="EMBL" id="BC063044">
    <property type="protein sequence ID" value="AAH63044.1"/>
    <property type="molecule type" value="mRNA"/>
</dbReference>
<dbReference type="CCDS" id="CCDS2863.1">
    <molecule id="P51957-1"/>
</dbReference>
<dbReference type="CCDS" id="CCDS54593.1">
    <molecule id="P51957-3"/>
</dbReference>
<dbReference type="CCDS" id="CCDS87089.1">
    <molecule id="P51957-2"/>
</dbReference>
<dbReference type="PIR" id="I78885">
    <property type="entry name" value="I78885"/>
</dbReference>
<dbReference type="RefSeq" id="NP_001180462.1">
    <molecule id="P51957-3"/>
    <property type="nucleotide sequence ID" value="NM_001193533.3"/>
</dbReference>
<dbReference type="RefSeq" id="NP_001335342.1">
    <molecule id="P51957-2"/>
    <property type="nucleotide sequence ID" value="NM_001348413.2"/>
</dbReference>
<dbReference type="RefSeq" id="NP_003148.2">
    <molecule id="P51957-1"/>
    <property type="nucleotide sequence ID" value="NM_003157.6"/>
</dbReference>
<dbReference type="SMR" id="P51957"/>
<dbReference type="BioGRID" id="112663">
    <property type="interactions" value="582"/>
</dbReference>
<dbReference type="FunCoup" id="P51957">
    <property type="interactions" value="2781"/>
</dbReference>
<dbReference type="IntAct" id="P51957">
    <property type="interactions" value="565"/>
</dbReference>
<dbReference type="MINT" id="P51957"/>
<dbReference type="STRING" id="9606.ENSP00000233027"/>
<dbReference type="BindingDB" id="P51957"/>
<dbReference type="ChEMBL" id="CHEMBL5819"/>
<dbReference type="DrugBank" id="DB12010">
    <property type="generic name" value="Fostamatinib"/>
</dbReference>
<dbReference type="DrugCentral" id="P51957"/>
<dbReference type="GlyGen" id="P51957">
    <property type="glycosylation" value="1 site, 1 O-linked glycan (1 site)"/>
</dbReference>
<dbReference type="iPTMnet" id="P51957"/>
<dbReference type="PhosphoSitePlus" id="P51957"/>
<dbReference type="BioMuta" id="NEK4"/>
<dbReference type="DMDM" id="229462924"/>
<dbReference type="jPOST" id="P51957"/>
<dbReference type="MassIVE" id="P51957"/>
<dbReference type="PaxDb" id="9606-ENSP00000233027"/>
<dbReference type="PeptideAtlas" id="P51957"/>
<dbReference type="ProteomicsDB" id="56459">
    <molecule id="P51957-1"/>
</dbReference>
<dbReference type="ProteomicsDB" id="56460">
    <molecule id="P51957-2"/>
</dbReference>
<dbReference type="ProteomicsDB" id="56461">
    <molecule id="P51957-3"/>
</dbReference>
<dbReference type="Pumba" id="P51957"/>
<dbReference type="Antibodypedia" id="14725">
    <property type="antibodies" value="212 antibodies from 29 providers"/>
</dbReference>
<dbReference type="DNASU" id="6787"/>
<dbReference type="Ensembl" id="ENST00000233027.10">
    <molecule id="P51957-1"/>
    <property type="protein sequence ID" value="ENSP00000233027.5"/>
    <property type="gene ID" value="ENSG00000114904.13"/>
</dbReference>
<dbReference type="Ensembl" id="ENST00000383721.8">
    <molecule id="P51957-2"/>
    <property type="protein sequence ID" value="ENSP00000373227.4"/>
    <property type="gene ID" value="ENSG00000114904.13"/>
</dbReference>
<dbReference type="Ensembl" id="ENST00000535191.5">
    <molecule id="P51957-3"/>
    <property type="protein sequence ID" value="ENSP00000437703.1"/>
    <property type="gene ID" value="ENSG00000114904.13"/>
</dbReference>
<dbReference type="GeneID" id="6787"/>
<dbReference type="KEGG" id="hsa:6787"/>
<dbReference type="MANE-Select" id="ENST00000233027.10">
    <property type="protein sequence ID" value="ENSP00000233027.5"/>
    <property type="RefSeq nucleotide sequence ID" value="NM_003157.6"/>
    <property type="RefSeq protein sequence ID" value="NP_003148.2"/>
</dbReference>
<dbReference type="UCSC" id="uc003dfq.5">
    <molecule id="P51957-1"/>
    <property type="organism name" value="human"/>
</dbReference>
<dbReference type="AGR" id="HGNC:11399"/>
<dbReference type="CTD" id="6787"/>
<dbReference type="DisGeNET" id="6787"/>
<dbReference type="GeneCards" id="NEK4"/>
<dbReference type="HGNC" id="HGNC:11399">
    <property type="gene designation" value="NEK4"/>
</dbReference>
<dbReference type="HPA" id="ENSG00000114904">
    <property type="expression patterns" value="Tissue enhanced (testis)"/>
</dbReference>
<dbReference type="MIM" id="601959">
    <property type="type" value="gene"/>
</dbReference>
<dbReference type="neXtProt" id="NX_P51957"/>
<dbReference type="OpenTargets" id="ENSG00000114904"/>
<dbReference type="PharmGKB" id="PA31548"/>
<dbReference type="VEuPathDB" id="HostDB:ENSG00000114904"/>
<dbReference type="eggNOG" id="KOG0589">
    <property type="taxonomic scope" value="Eukaryota"/>
</dbReference>
<dbReference type="GeneTree" id="ENSGT00940000157448"/>
<dbReference type="HOGENOM" id="CLU_017439_0_0_1"/>
<dbReference type="InParanoid" id="P51957"/>
<dbReference type="OMA" id="CLREHMG"/>
<dbReference type="OrthoDB" id="248923at2759"/>
<dbReference type="PAN-GO" id="P51957">
    <property type="GO annotations" value="2 GO annotations based on evolutionary models"/>
</dbReference>
<dbReference type="PhylomeDB" id="P51957"/>
<dbReference type="TreeFam" id="TF106472"/>
<dbReference type="PathwayCommons" id="P51957"/>
<dbReference type="SignaLink" id="P51957"/>
<dbReference type="BioGRID-ORCS" id="6787">
    <property type="hits" value="13 hits in 1191 CRISPR screens"/>
</dbReference>
<dbReference type="ChiTaRS" id="NEK4">
    <property type="organism name" value="human"/>
</dbReference>
<dbReference type="GenomeRNAi" id="6787"/>
<dbReference type="Pharos" id="P51957">
    <property type="development level" value="Tchem"/>
</dbReference>
<dbReference type="PRO" id="PR:P51957"/>
<dbReference type="Proteomes" id="UP000005640">
    <property type="component" value="Chromosome 3"/>
</dbReference>
<dbReference type="RNAct" id="P51957">
    <property type="molecule type" value="protein"/>
</dbReference>
<dbReference type="Bgee" id="ENSG00000114904">
    <property type="expression patterns" value="Expressed in bronchial epithelial cell and 200 other cell types or tissues"/>
</dbReference>
<dbReference type="ExpressionAtlas" id="P51957">
    <property type="expression patterns" value="baseline and differential"/>
</dbReference>
<dbReference type="GO" id="GO:0036064">
    <property type="term" value="C:ciliary basal body"/>
    <property type="evidence" value="ECO:0007669"/>
    <property type="project" value="Ensembl"/>
</dbReference>
<dbReference type="GO" id="GO:0097014">
    <property type="term" value="C:ciliary plasm"/>
    <property type="evidence" value="ECO:0007669"/>
    <property type="project" value="Ensembl"/>
</dbReference>
<dbReference type="GO" id="GO:0035253">
    <property type="term" value="C:ciliary rootlet"/>
    <property type="evidence" value="ECO:0007669"/>
    <property type="project" value="Ensembl"/>
</dbReference>
<dbReference type="GO" id="GO:0035869">
    <property type="term" value="C:ciliary transition zone"/>
    <property type="evidence" value="ECO:0007669"/>
    <property type="project" value="Ensembl"/>
</dbReference>
<dbReference type="GO" id="GO:0005737">
    <property type="term" value="C:cytoplasm"/>
    <property type="evidence" value="ECO:0000250"/>
    <property type="project" value="UniProtKB"/>
</dbReference>
<dbReference type="GO" id="GO:0005829">
    <property type="term" value="C:cytosol"/>
    <property type="evidence" value="ECO:0000314"/>
    <property type="project" value="HPA"/>
</dbReference>
<dbReference type="GO" id="GO:0005524">
    <property type="term" value="F:ATP binding"/>
    <property type="evidence" value="ECO:0007669"/>
    <property type="project" value="UniProtKB-KW"/>
</dbReference>
<dbReference type="GO" id="GO:0030145">
    <property type="term" value="F:manganese ion binding"/>
    <property type="evidence" value="ECO:0000250"/>
    <property type="project" value="UniProtKB"/>
</dbReference>
<dbReference type="GO" id="GO:0106310">
    <property type="term" value="F:protein serine kinase activity"/>
    <property type="evidence" value="ECO:0007669"/>
    <property type="project" value="RHEA"/>
</dbReference>
<dbReference type="GO" id="GO:0004674">
    <property type="term" value="F:protein serine/threonine kinase activity"/>
    <property type="evidence" value="ECO:0000250"/>
    <property type="project" value="UniProtKB"/>
</dbReference>
<dbReference type="GO" id="GO:0051301">
    <property type="term" value="P:cell division"/>
    <property type="evidence" value="ECO:0007669"/>
    <property type="project" value="UniProtKB-KW"/>
</dbReference>
<dbReference type="GO" id="GO:0006974">
    <property type="term" value="P:DNA damage response"/>
    <property type="evidence" value="ECO:0000315"/>
    <property type="project" value="UniProtKB"/>
</dbReference>
<dbReference type="GO" id="GO:0000278">
    <property type="term" value="P:mitotic cell cycle"/>
    <property type="evidence" value="ECO:0000315"/>
    <property type="project" value="UniProtKB"/>
</dbReference>
<dbReference type="GO" id="GO:0045893">
    <property type="term" value="P:positive regulation of DNA-templated transcription"/>
    <property type="evidence" value="ECO:0000315"/>
    <property type="project" value="CACAO"/>
</dbReference>
<dbReference type="GO" id="GO:0006468">
    <property type="term" value="P:protein phosphorylation"/>
    <property type="evidence" value="ECO:0000250"/>
    <property type="project" value="UniProtKB"/>
</dbReference>
<dbReference type="GO" id="GO:2000772">
    <property type="term" value="P:regulation of cellular senescence"/>
    <property type="evidence" value="ECO:0000315"/>
    <property type="project" value="UniProtKB"/>
</dbReference>
<dbReference type="CDD" id="cd08223">
    <property type="entry name" value="STKc_Nek4"/>
    <property type="match status" value="1"/>
</dbReference>
<dbReference type="FunFam" id="1.10.510.10:FF:001276">
    <property type="entry name" value="NEK4 isoform 4"/>
    <property type="match status" value="1"/>
</dbReference>
<dbReference type="FunFam" id="3.30.200.20:FF:000247">
    <property type="entry name" value="serine/threonine-protein kinase Nek4 isoform X1"/>
    <property type="match status" value="1"/>
</dbReference>
<dbReference type="Gene3D" id="3.30.200.20">
    <property type="entry name" value="Phosphorylase Kinase, domain 1"/>
    <property type="match status" value="1"/>
</dbReference>
<dbReference type="Gene3D" id="1.10.510.10">
    <property type="entry name" value="Transferase(Phosphotransferase) domain 1"/>
    <property type="match status" value="1"/>
</dbReference>
<dbReference type="InterPro" id="IPR011009">
    <property type="entry name" value="Kinase-like_dom_sf"/>
</dbReference>
<dbReference type="InterPro" id="IPR051131">
    <property type="entry name" value="NEK_Ser/Thr_kinase_NIMA"/>
</dbReference>
<dbReference type="InterPro" id="IPR000719">
    <property type="entry name" value="Prot_kinase_dom"/>
</dbReference>
<dbReference type="InterPro" id="IPR017441">
    <property type="entry name" value="Protein_kinase_ATP_BS"/>
</dbReference>
<dbReference type="InterPro" id="IPR008271">
    <property type="entry name" value="Ser/Thr_kinase_AS"/>
</dbReference>
<dbReference type="PANTHER" id="PTHR44899">
    <property type="entry name" value="CAMK FAMILY PROTEIN KINASE"/>
    <property type="match status" value="1"/>
</dbReference>
<dbReference type="PANTHER" id="PTHR44899:SF7">
    <property type="entry name" value="NIMA-RELATED KINASE"/>
    <property type="match status" value="1"/>
</dbReference>
<dbReference type="Pfam" id="PF00069">
    <property type="entry name" value="Pkinase"/>
    <property type="match status" value="1"/>
</dbReference>
<dbReference type="SMART" id="SM00220">
    <property type="entry name" value="S_TKc"/>
    <property type="match status" value="1"/>
</dbReference>
<dbReference type="SUPFAM" id="SSF56112">
    <property type="entry name" value="Protein kinase-like (PK-like)"/>
    <property type="match status" value="1"/>
</dbReference>
<dbReference type="PROSITE" id="PS00107">
    <property type="entry name" value="PROTEIN_KINASE_ATP"/>
    <property type="match status" value="1"/>
</dbReference>
<dbReference type="PROSITE" id="PS50011">
    <property type="entry name" value="PROTEIN_KINASE_DOM"/>
    <property type="match status" value="1"/>
</dbReference>
<dbReference type="PROSITE" id="PS00108">
    <property type="entry name" value="PROTEIN_KINASE_ST"/>
    <property type="match status" value="1"/>
</dbReference>